<keyword id="KW-0067">ATP-binding</keyword>
<keyword id="KW-0315">Glutamine amidotransferase</keyword>
<keyword id="KW-0436">Ligase</keyword>
<keyword id="KW-0460">Magnesium</keyword>
<keyword id="KW-0479">Metal-binding</keyword>
<keyword id="KW-0547">Nucleotide-binding</keyword>
<keyword id="KW-0665">Pyrimidine biosynthesis</keyword>
<keyword id="KW-1185">Reference proteome</keyword>
<comment type="function">
    <text evidence="1">Catalyzes the ATP-dependent amination of UTP to CTP with either L-glutamine or ammonia as the source of nitrogen. Regulates intracellular CTP levels through interactions with the four ribonucleotide triphosphates.</text>
</comment>
<comment type="catalytic activity">
    <reaction evidence="1">
        <text>UTP + L-glutamine + ATP + H2O = CTP + L-glutamate + ADP + phosphate + 2 H(+)</text>
        <dbReference type="Rhea" id="RHEA:26426"/>
        <dbReference type="ChEBI" id="CHEBI:15377"/>
        <dbReference type="ChEBI" id="CHEBI:15378"/>
        <dbReference type="ChEBI" id="CHEBI:29985"/>
        <dbReference type="ChEBI" id="CHEBI:30616"/>
        <dbReference type="ChEBI" id="CHEBI:37563"/>
        <dbReference type="ChEBI" id="CHEBI:43474"/>
        <dbReference type="ChEBI" id="CHEBI:46398"/>
        <dbReference type="ChEBI" id="CHEBI:58359"/>
        <dbReference type="ChEBI" id="CHEBI:456216"/>
        <dbReference type="EC" id="6.3.4.2"/>
    </reaction>
</comment>
<comment type="catalytic activity">
    <reaction evidence="1">
        <text>L-glutamine + H2O = L-glutamate + NH4(+)</text>
        <dbReference type="Rhea" id="RHEA:15889"/>
        <dbReference type="ChEBI" id="CHEBI:15377"/>
        <dbReference type="ChEBI" id="CHEBI:28938"/>
        <dbReference type="ChEBI" id="CHEBI:29985"/>
        <dbReference type="ChEBI" id="CHEBI:58359"/>
    </reaction>
</comment>
<comment type="catalytic activity">
    <reaction evidence="1">
        <text>UTP + NH4(+) + ATP = CTP + ADP + phosphate + 2 H(+)</text>
        <dbReference type="Rhea" id="RHEA:16597"/>
        <dbReference type="ChEBI" id="CHEBI:15378"/>
        <dbReference type="ChEBI" id="CHEBI:28938"/>
        <dbReference type="ChEBI" id="CHEBI:30616"/>
        <dbReference type="ChEBI" id="CHEBI:37563"/>
        <dbReference type="ChEBI" id="CHEBI:43474"/>
        <dbReference type="ChEBI" id="CHEBI:46398"/>
        <dbReference type="ChEBI" id="CHEBI:456216"/>
    </reaction>
</comment>
<comment type="activity regulation">
    <text evidence="1">Allosterically activated by GTP, when glutamine is the substrate; GTP has no effect on the reaction when ammonia is the substrate. The allosteric effector GTP functions by stabilizing the protein conformation that binds the tetrahedral intermediate(s) formed during glutamine hydrolysis. Inhibited by the product CTP, via allosteric rather than competitive inhibition.</text>
</comment>
<comment type="pathway">
    <text evidence="1">Pyrimidine metabolism; CTP biosynthesis via de novo pathway; CTP from UDP: step 2/2.</text>
</comment>
<comment type="subunit">
    <text evidence="1">Homotetramer.</text>
</comment>
<comment type="miscellaneous">
    <text evidence="1">CTPSs have evolved a hybrid strategy for distinguishing between UTP and CTP. The overlapping regions of the product feedback inhibitory and substrate sites recognize a common feature in both compounds, the triphosphate moiety. To differentiate isosteric substrate and product pyrimidine rings, an additional pocket far from the expected kinase/ligase catalytic site, specifically recognizes the cytosine and ribose portions of the product inhibitor.</text>
</comment>
<comment type="similarity">
    <text evidence="1">Belongs to the CTP synthase family.</text>
</comment>
<organism>
    <name type="scientific">Cronobacter sakazakii (strain ATCC BAA-894)</name>
    <name type="common">Enterobacter sakazakii</name>
    <dbReference type="NCBI Taxonomy" id="290339"/>
    <lineage>
        <taxon>Bacteria</taxon>
        <taxon>Pseudomonadati</taxon>
        <taxon>Pseudomonadota</taxon>
        <taxon>Gammaproteobacteria</taxon>
        <taxon>Enterobacterales</taxon>
        <taxon>Enterobacteriaceae</taxon>
        <taxon>Cronobacter</taxon>
    </lineage>
</organism>
<evidence type="ECO:0000255" key="1">
    <source>
        <dbReference type="HAMAP-Rule" id="MF_01227"/>
    </source>
</evidence>
<proteinExistence type="inferred from homology"/>
<name>PYRG_CROS8</name>
<sequence>MTTNYIFVTGGVVSSLGKGIAAASLAAILEARGLNVTIMKLDPYINVDPGTMSPIQHGEVFVTEDGAETDLDLGHYERFIRTRMTRRNNFTTGRIYSEVLRKERRGDYLGATVQVIPHITNAIKERILAGGEGHDVVLVEIGGTVGDIESLPFLEAIRQMAVEVGREHTMFMHLTLVPYMAAAGEVKTKPTQHSVKELLSIGIQPDVLICRSDRAVPANERAKIALFCNVPEKAVISLKDVDSIYKIPGLLKSQGLDDYICKRFSLNCPEANLSEWEQVIYEEANPVGEVTIGMVGKYIELPDAYKSVIEALKHGGLKNRVTVNIKLIDSQDVETRGEELLKGLDAILIPGGFGYRGVEGKIATARYARENNIPYLGICLGMQVAMIEYARNVAGMENANSTEFVPDCKYPVVALITEWRDENGNVETRSEKSDLGGTMRLGAQQCQLSDDSLVRKLYGEPVITERHRHRYEVNNMLLKPIEAAGLRVAGRSGDDQLVEIIEVPNHPWFVACQFHPEFTSTPRDGHPLFAGFVKAASEYQKRQAK</sequence>
<reference key="1">
    <citation type="journal article" date="2010" name="PLoS ONE">
        <title>Genome sequence of Cronobacter sakazakii BAA-894 and comparative genomic hybridization analysis with other Cronobacter species.</title>
        <authorList>
            <person name="Kucerova E."/>
            <person name="Clifton S.W."/>
            <person name="Xia X.Q."/>
            <person name="Long F."/>
            <person name="Porwollik S."/>
            <person name="Fulton L."/>
            <person name="Fronick C."/>
            <person name="Minx P."/>
            <person name="Kyung K."/>
            <person name="Warren W."/>
            <person name="Fulton R."/>
            <person name="Feng D."/>
            <person name="Wollam A."/>
            <person name="Shah N."/>
            <person name="Bhonagiri V."/>
            <person name="Nash W.E."/>
            <person name="Hallsworth-Pepin K."/>
            <person name="Wilson R.K."/>
            <person name="McClelland M."/>
            <person name="Forsythe S.J."/>
        </authorList>
    </citation>
    <scope>NUCLEOTIDE SEQUENCE [LARGE SCALE GENOMIC DNA]</scope>
    <source>
        <strain>ATCC BAA-894</strain>
    </source>
</reference>
<gene>
    <name evidence="1" type="primary">pyrG</name>
    <name type="ordered locus">ESA_00521</name>
</gene>
<protein>
    <recommendedName>
        <fullName evidence="1">CTP synthase</fullName>
        <ecNumber evidence="1">6.3.4.2</ecNumber>
    </recommendedName>
    <alternativeName>
        <fullName evidence="1">Cytidine 5'-triphosphate synthase</fullName>
    </alternativeName>
    <alternativeName>
        <fullName evidence="1">Cytidine triphosphate synthetase</fullName>
        <shortName evidence="1">CTP synthetase</shortName>
        <shortName evidence="1">CTPS</shortName>
    </alternativeName>
    <alternativeName>
        <fullName evidence="1">UTP--ammonia ligase</fullName>
    </alternativeName>
</protein>
<feature type="chain" id="PRO_1000139452" description="CTP synthase">
    <location>
        <begin position="1"/>
        <end position="545"/>
    </location>
</feature>
<feature type="domain" description="Glutamine amidotransferase type-1" evidence="1">
    <location>
        <begin position="291"/>
        <end position="542"/>
    </location>
</feature>
<feature type="region of interest" description="Amidoligase domain" evidence="1">
    <location>
        <begin position="1"/>
        <end position="266"/>
    </location>
</feature>
<feature type="active site" description="Nucleophile; for glutamine hydrolysis" evidence="1">
    <location>
        <position position="379"/>
    </location>
</feature>
<feature type="active site" evidence="1">
    <location>
        <position position="515"/>
    </location>
</feature>
<feature type="active site" evidence="1">
    <location>
        <position position="517"/>
    </location>
</feature>
<feature type="binding site" evidence="1">
    <location>
        <position position="14"/>
    </location>
    <ligand>
        <name>CTP</name>
        <dbReference type="ChEBI" id="CHEBI:37563"/>
        <note>allosteric inhibitor</note>
    </ligand>
</feature>
<feature type="binding site" evidence="1">
    <location>
        <position position="14"/>
    </location>
    <ligand>
        <name>UTP</name>
        <dbReference type="ChEBI" id="CHEBI:46398"/>
    </ligand>
</feature>
<feature type="binding site" evidence="1">
    <location>
        <begin position="15"/>
        <end position="20"/>
    </location>
    <ligand>
        <name>ATP</name>
        <dbReference type="ChEBI" id="CHEBI:30616"/>
    </ligand>
</feature>
<feature type="binding site" evidence="1">
    <location>
        <position position="72"/>
    </location>
    <ligand>
        <name>ATP</name>
        <dbReference type="ChEBI" id="CHEBI:30616"/>
    </ligand>
</feature>
<feature type="binding site" evidence="1">
    <location>
        <position position="72"/>
    </location>
    <ligand>
        <name>Mg(2+)</name>
        <dbReference type="ChEBI" id="CHEBI:18420"/>
    </ligand>
</feature>
<feature type="binding site" evidence="1">
    <location>
        <position position="140"/>
    </location>
    <ligand>
        <name>Mg(2+)</name>
        <dbReference type="ChEBI" id="CHEBI:18420"/>
    </ligand>
</feature>
<feature type="binding site" evidence="1">
    <location>
        <begin position="147"/>
        <end position="149"/>
    </location>
    <ligand>
        <name>CTP</name>
        <dbReference type="ChEBI" id="CHEBI:37563"/>
        <note>allosteric inhibitor</note>
    </ligand>
</feature>
<feature type="binding site" evidence="1">
    <location>
        <begin position="187"/>
        <end position="192"/>
    </location>
    <ligand>
        <name>CTP</name>
        <dbReference type="ChEBI" id="CHEBI:37563"/>
        <note>allosteric inhibitor</note>
    </ligand>
</feature>
<feature type="binding site" evidence="1">
    <location>
        <begin position="187"/>
        <end position="192"/>
    </location>
    <ligand>
        <name>UTP</name>
        <dbReference type="ChEBI" id="CHEBI:46398"/>
    </ligand>
</feature>
<feature type="binding site" evidence="1">
    <location>
        <position position="223"/>
    </location>
    <ligand>
        <name>CTP</name>
        <dbReference type="ChEBI" id="CHEBI:37563"/>
        <note>allosteric inhibitor</note>
    </ligand>
</feature>
<feature type="binding site" evidence="1">
    <location>
        <position position="223"/>
    </location>
    <ligand>
        <name>UTP</name>
        <dbReference type="ChEBI" id="CHEBI:46398"/>
    </ligand>
</feature>
<feature type="binding site" evidence="1">
    <location>
        <begin position="239"/>
        <end position="241"/>
    </location>
    <ligand>
        <name>ATP</name>
        <dbReference type="ChEBI" id="CHEBI:30616"/>
    </ligand>
</feature>
<feature type="binding site" evidence="1">
    <location>
        <position position="352"/>
    </location>
    <ligand>
        <name>L-glutamine</name>
        <dbReference type="ChEBI" id="CHEBI:58359"/>
    </ligand>
</feature>
<feature type="binding site" evidence="1">
    <location>
        <begin position="380"/>
        <end position="383"/>
    </location>
    <ligand>
        <name>L-glutamine</name>
        <dbReference type="ChEBI" id="CHEBI:58359"/>
    </ligand>
</feature>
<feature type="binding site" evidence="1">
    <location>
        <position position="403"/>
    </location>
    <ligand>
        <name>L-glutamine</name>
        <dbReference type="ChEBI" id="CHEBI:58359"/>
    </ligand>
</feature>
<feature type="binding site" evidence="1">
    <location>
        <position position="470"/>
    </location>
    <ligand>
        <name>L-glutamine</name>
        <dbReference type="ChEBI" id="CHEBI:58359"/>
    </ligand>
</feature>
<accession>A7MQY9</accession>
<dbReference type="EC" id="6.3.4.2" evidence="1"/>
<dbReference type="EMBL" id="CP000783">
    <property type="protein sequence ID" value="ABU75812.1"/>
    <property type="molecule type" value="Genomic_DNA"/>
</dbReference>
<dbReference type="RefSeq" id="WP_012123919.1">
    <property type="nucleotide sequence ID" value="NC_009778.1"/>
</dbReference>
<dbReference type="SMR" id="A7MQY9"/>
<dbReference type="KEGG" id="esa:ESA_00521"/>
<dbReference type="PATRIC" id="fig|290339.8.peg.469"/>
<dbReference type="HOGENOM" id="CLU_011675_5_0_6"/>
<dbReference type="UniPathway" id="UPA00159">
    <property type="reaction ID" value="UER00277"/>
</dbReference>
<dbReference type="Proteomes" id="UP000000260">
    <property type="component" value="Chromosome"/>
</dbReference>
<dbReference type="GO" id="GO:0005829">
    <property type="term" value="C:cytosol"/>
    <property type="evidence" value="ECO:0007669"/>
    <property type="project" value="TreeGrafter"/>
</dbReference>
<dbReference type="GO" id="GO:0005524">
    <property type="term" value="F:ATP binding"/>
    <property type="evidence" value="ECO:0007669"/>
    <property type="project" value="UniProtKB-KW"/>
</dbReference>
<dbReference type="GO" id="GO:0003883">
    <property type="term" value="F:CTP synthase activity"/>
    <property type="evidence" value="ECO:0007669"/>
    <property type="project" value="UniProtKB-UniRule"/>
</dbReference>
<dbReference type="GO" id="GO:0004359">
    <property type="term" value="F:glutaminase activity"/>
    <property type="evidence" value="ECO:0007669"/>
    <property type="project" value="RHEA"/>
</dbReference>
<dbReference type="GO" id="GO:0042802">
    <property type="term" value="F:identical protein binding"/>
    <property type="evidence" value="ECO:0007669"/>
    <property type="project" value="TreeGrafter"/>
</dbReference>
<dbReference type="GO" id="GO:0046872">
    <property type="term" value="F:metal ion binding"/>
    <property type="evidence" value="ECO:0007669"/>
    <property type="project" value="UniProtKB-KW"/>
</dbReference>
<dbReference type="GO" id="GO:0044210">
    <property type="term" value="P:'de novo' CTP biosynthetic process"/>
    <property type="evidence" value="ECO:0007669"/>
    <property type="project" value="UniProtKB-UniRule"/>
</dbReference>
<dbReference type="GO" id="GO:0019856">
    <property type="term" value="P:pyrimidine nucleobase biosynthetic process"/>
    <property type="evidence" value="ECO:0007669"/>
    <property type="project" value="TreeGrafter"/>
</dbReference>
<dbReference type="CDD" id="cd03113">
    <property type="entry name" value="CTPS_N"/>
    <property type="match status" value="1"/>
</dbReference>
<dbReference type="CDD" id="cd01746">
    <property type="entry name" value="GATase1_CTP_Synthase"/>
    <property type="match status" value="1"/>
</dbReference>
<dbReference type="FunFam" id="3.40.50.300:FF:000009">
    <property type="entry name" value="CTP synthase"/>
    <property type="match status" value="1"/>
</dbReference>
<dbReference type="FunFam" id="3.40.50.880:FF:000002">
    <property type="entry name" value="CTP synthase"/>
    <property type="match status" value="1"/>
</dbReference>
<dbReference type="Gene3D" id="3.40.50.880">
    <property type="match status" value="1"/>
</dbReference>
<dbReference type="Gene3D" id="3.40.50.300">
    <property type="entry name" value="P-loop containing nucleotide triphosphate hydrolases"/>
    <property type="match status" value="1"/>
</dbReference>
<dbReference type="HAMAP" id="MF_01227">
    <property type="entry name" value="PyrG"/>
    <property type="match status" value="1"/>
</dbReference>
<dbReference type="InterPro" id="IPR029062">
    <property type="entry name" value="Class_I_gatase-like"/>
</dbReference>
<dbReference type="InterPro" id="IPR004468">
    <property type="entry name" value="CTP_synthase"/>
</dbReference>
<dbReference type="InterPro" id="IPR017456">
    <property type="entry name" value="CTP_synthase_N"/>
</dbReference>
<dbReference type="InterPro" id="IPR017926">
    <property type="entry name" value="GATASE"/>
</dbReference>
<dbReference type="InterPro" id="IPR033828">
    <property type="entry name" value="GATase1_CTP_Synthase"/>
</dbReference>
<dbReference type="InterPro" id="IPR027417">
    <property type="entry name" value="P-loop_NTPase"/>
</dbReference>
<dbReference type="NCBIfam" id="NF003792">
    <property type="entry name" value="PRK05380.1"/>
    <property type="match status" value="1"/>
</dbReference>
<dbReference type="NCBIfam" id="TIGR00337">
    <property type="entry name" value="PyrG"/>
    <property type="match status" value="1"/>
</dbReference>
<dbReference type="PANTHER" id="PTHR11550">
    <property type="entry name" value="CTP SYNTHASE"/>
    <property type="match status" value="1"/>
</dbReference>
<dbReference type="PANTHER" id="PTHR11550:SF0">
    <property type="entry name" value="CTP SYNTHASE-RELATED"/>
    <property type="match status" value="1"/>
</dbReference>
<dbReference type="Pfam" id="PF06418">
    <property type="entry name" value="CTP_synth_N"/>
    <property type="match status" value="1"/>
</dbReference>
<dbReference type="Pfam" id="PF00117">
    <property type="entry name" value="GATase"/>
    <property type="match status" value="1"/>
</dbReference>
<dbReference type="SUPFAM" id="SSF52317">
    <property type="entry name" value="Class I glutamine amidotransferase-like"/>
    <property type="match status" value="1"/>
</dbReference>
<dbReference type="SUPFAM" id="SSF52540">
    <property type="entry name" value="P-loop containing nucleoside triphosphate hydrolases"/>
    <property type="match status" value="1"/>
</dbReference>
<dbReference type="PROSITE" id="PS51273">
    <property type="entry name" value="GATASE_TYPE_1"/>
    <property type="match status" value="1"/>
</dbReference>